<organism>
    <name type="scientific">Salinispora tropica (strain ATCC BAA-916 / DSM 44818 / JCM 13857 / NBRC 105044 / CNB-440)</name>
    <dbReference type="NCBI Taxonomy" id="369723"/>
    <lineage>
        <taxon>Bacteria</taxon>
        <taxon>Bacillati</taxon>
        <taxon>Actinomycetota</taxon>
        <taxon>Actinomycetes</taxon>
        <taxon>Micromonosporales</taxon>
        <taxon>Micromonosporaceae</taxon>
        <taxon>Salinispora</taxon>
    </lineage>
</organism>
<proteinExistence type="inferred from homology"/>
<sequence length="188" mass="20334">MQVPAVLGEPIRFVLNWGRRYSLWVFNFGLACCAIEFIATSMSRHDFMRLGVIPFAHGPRQADLMVVSGTVTDKMAPAIKRLYDQMPEPKYVISFGACSNCGGPYWDSYSVTKGVDQLIPVDVYVPGCPPRPEALLHGILRLQEKIAAEEAGVGGVSRPDALASPADALPPRAADSLTAPPVRPPDPS</sequence>
<accession>A4X1X5</accession>
<gene>
    <name type="primary">nuoB1</name>
    <name type="ordered locus">Strop_0390</name>
</gene>
<dbReference type="EC" id="7.1.1.-"/>
<dbReference type="EMBL" id="CP000667">
    <property type="protein sequence ID" value="ABP52875.1"/>
    <property type="molecule type" value="Genomic_DNA"/>
</dbReference>
<dbReference type="RefSeq" id="WP_011904309.1">
    <property type="nucleotide sequence ID" value="NC_009380.1"/>
</dbReference>
<dbReference type="SMR" id="A4X1X5"/>
<dbReference type="STRING" id="369723.Strop_0390"/>
<dbReference type="KEGG" id="stp:Strop_0390"/>
<dbReference type="PATRIC" id="fig|369723.5.peg.404"/>
<dbReference type="eggNOG" id="COG0377">
    <property type="taxonomic scope" value="Bacteria"/>
</dbReference>
<dbReference type="HOGENOM" id="CLU_055737_4_2_11"/>
<dbReference type="Proteomes" id="UP000000235">
    <property type="component" value="Chromosome"/>
</dbReference>
<dbReference type="GO" id="GO:0005886">
    <property type="term" value="C:plasma membrane"/>
    <property type="evidence" value="ECO:0007669"/>
    <property type="project" value="UniProtKB-SubCell"/>
</dbReference>
<dbReference type="GO" id="GO:0045271">
    <property type="term" value="C:respiratory chain complex I"/>
    <property type="evidence" value="ECO:0007669"/>
    <property type="project" value="TreeGrafter"/>
</dbReference>
<dbReference type="GO" id="GO:0051539">
    <property type="term" value="F:4 iron, 4 sulfur cluster binding"/>
    <property type="evidence" value="ECO:0007669"/>
    <property type="project" value="UniProtKB-KW"/>
</dbReference>
<dbReference type="GO" id="GO:0005506">
    <property type="term" value="F:iron ion binding"/>
    <property type="evidence" value="ECO:0007669"/>
    <property type="project" value="UniProtKB-UniRule"/>
</dbReference>
<dbReference type="GO" id="GO:0008137">
    <property type="term" value="F:NADH dehydrogenase (ubiquinone) activity"/>
    <property type="evidence" value="ECO:0007669"/>
    <property type="project" value="InterPro"/>
</dbReference>
<dbReference type="GO" id="GO:0050136">
    <property type="term" value="F:NADH:ubiquinone reductase (non-electrogenic) activity"/>
    <property type="evidence" value="ECO:0007669"/>
    <property type="project" value="UniProtKB-UniRule"/>
</dbReference>
<dbReference type="GO" id="GO:0048038">
    <property type="term" value="F:quinone binding"/>
    <property type="evidence" value="ECO:0007669"/>
    <property type="project" value="UniProtKB-KW"/>
</dbReference>
<dbReference type="GO" id="GO:0009060">
    <property type="term" value="P:aerobic respiration"/>
    <property type="evidence" value="ECO:0007669"/>
    <property type="project" value="TreeGrafter"/>
</dbReference>
<dbReference type="GO" id="GO:0015990">
    <property type="term" value="P:electron transport coupled proton transport"/>
    <property type="evidence" value="ECO:0007669"/>
    <property type="project" value="TreeGrafter"/>
</dbReference>
<dbReference type="FunFam" id="3.40.50.12280:FF:000002">
    <property type="entry name" value="NADH-quinone oxidoreductase subunit B"/>
    <property type="match status" value="1"/>
</dbReference>
<dbReference type="Gene3D" id="3.40.50.12280">
    <property type="match status" value="1"/>
</dbReference>
<dbReference type="HAMAP" id="MF_01356">
    <property type="entry name" value="NDH1_NuoB"/>
    <property type="match status" value="1"/>
</dbReference>
<dbReference type="InterPro" id="IPR006137">
    <property type="entry name" value="NADH_UbQ_OxRdtase-like_20kDa"/>
</dbReference>
<dbReference type="InterPro" id="IPR006138">
    <property type="entry name" value="NADH_UQ_OxRdtase_20Kd_su"/>
</dbReference>
<dbReference type="NCBIfam" id="TIGR01957">
    <property type="entry name" value="nuoB_fam"/>
    <property type="match status" value="1"/>
</dbReference>
<dbReference type="NCBIfam" id="NF005012">
    <property type="entry name" value="PRK06411.1"/>
    <property type="match status" value="1"/>
</dbReference>
<dbReference type="PANTHER" id="PTHR11995">
    <property type="entry name" value="NADH DEHYDROGENASE"/>
    <property type="match status" value="1"/>
</dbReference>
<dbReference type="PANTHER" id="PTHR11995:SF33">
    <property type="entry name" value="NADH-QUINONE OXIDOREDUCTASE SUBUNIT B 2"/>
    <property type="match status" value="1"/>
</dbReference>
<dbReference type="Pfam" id="PF01058">
    <property type="entry name" value="Oxidored_q6"/>
    <property type="match status" value="1"/>
</dbReference>
<dbReference type="SUPFAM" id="SSF56770">
    <property type="entry name" value="HydA/Nqo6-like"/>
    <property type="match status" value="1"/>
</dbReference>
<protein>
    <recommendedName>
        <fullName>NADH-quinone oxidoreductase subunit B 1</fullName>
        <ecNumber>7.1.1.-</ecNumber>
    </recommendedName>
    <alternativeName>
        <fullName>NADH dehydrogenase I subunit B 1</fullName>
    </alternativeName>
    <alternativeName>
        <fullName>NDH-1 subunit B 1</fullName>
    </alternativeName>
</protein>
<keyword id="KW-0004">4Fe-4S</keyword>
<keyword id="KW-1003">Cell membrane</keyword>
<keyword id="KW-0408">Iron</keyword>
<keyword id="KW-0411">Iron-sulfur</keyword>
<keyword id="KW-0472">Membrane</keyword>
<keyword id="KW-0479">Metal-binding</keyword>
<keyword id="KW-0520">NAD</keyword>
<keyword id="KW-0874">Quinone</keyword>
<keyword id="KW-1185">Reference proteome</keyword>
<keyword id="KW-1278">Translocase</keyword>
<keyword id="KW-0813">Transport</keyword>
<feature type="chain" id="PRO_0000376357" description="NADH-quinone oxidoreductase subunit B 1">
    <location>
        <begin position="1"/>
        <end position="188"/>
    </location>
</feature>
<feature type="region of interest" description="Disordered" evidence="2">
    <location>
        <begin position="153"/>
        <end position="188"/>
    </location>
</feature>
<feature type="compositionally biased region" description="Low complexity" evidence="2">
    <location>
        <begin position="157"/>
        <end position="177"/>
    </location>
</feature>
<feature type="binding site" evidence="1">
    <location>
        <position position="32"/>
    </location>
    <ligand>
        <name>[4Fe-4S] cluster</name>
        <dbReference type="ChEBI" id="CHEBI:49883"/>
    </ligand>
</feature>
<feature type="binding site" evidence="1">
    <location>
        <position position="33"/>
    </location>
    <ligand>
        <name>[4Fe-4S] cluster</name>
        <dbReference type="ChEBI" id="CHEBI:49883"/>
    </ligand>
</feature>
<feature type="binding site" evidence="1">
    <location>
        <position position="98"/>
    </location>
    <ligand>
        <name>[4Fe-4S] cluster</name>
        <dbReference type="ChEBI" id="CHEBI:49883"/>
    </ligand>
</feature>
<feature type="binding site" evidence="1">
    <location>
        <position position="128"/>
    </location>
    <ligand>
        <name>[4Fe-4S] cluster</name>
        <dbReference type="ChEBI" id="CHEBI:49883"/>
    </ligand>
</feature>
<evidence type="ECO:0000250" key="1"/>
<evidence type="ECO:0000256" key="2">
    <source>
        <dbReference type="SAM" id="MobiDB-lite"/>
    </source>
</evidence>
<evidence type="ECO:0000305" key="3"/>
<name>NUOB1_SALTO</name>
<comment type="function">
    <text evidence="1">NDH-1 shuttles electrons from NADH, via FMN and iron-sulfur (Fe-S) centers, to quinones in the respiratory chain. The immediate electron acceptor for the enzyme in this species is believed to be a menaquinone. Couples the redox reaction to proton translocation (for every two electrons transferred, four hydrogen ions are translocated across the cytoplasmic membrane), and thus conserves the redox energy in a proton gradient.</text>
</comment>
<comment type="catalytic activity">
    <reaction>
        <text>a quinone + NADH + 5 H(+)(in) = a quinol + NAD(+) + 4 H(+)(out)</text>
        <dbReference type="Rhea" id="RHEA:57888"/>
        <dbReference type="ChEBI" id="CHEBI:15378"/>
        <dbReference type="ChEBI" id="CHEBI:24646"/>
        <dbReference type="ChEBI" id="CHEBI:57540"/>
        <dbReference type="ChEBI" id="CHEBI:57945"/>
        <dbReference type="ChEBI" id="CHEBI:132124"/>
    </reaction>
</comment>
<comment type="cofactor">
    <cofactor evidence="1">
        <name>[4Fe-4S] cluster</name>
        <dbReference type="ChEBI" id="CHEBI:49883"/>
    </cofactor>
    <text evidence="1">Binds 1 [4Fe-4S] cluster.</text>
</comment>
<comment type="subunit">
    <text evidence="1">NDH-1 is composed of 14 different subunits. Subunits NuoB, C, D, E, F, and G constitute the peripheral sector of the complex (By similarity).</text>
</comment>
<comment type="subcellular location">
    <subcellularLocation>
        <location evidence="1">Cell membrane</location>
        <topology evidence="1">Peripheral membrane protein</topology>
        <orientation evidence="1">Cytoplasmic side</orientation>
    </subcellularLocation>
</comment>
<comment type="similarity">
    <text evidence="3">Belongs to the complex I 20 kDa subunit family.</text>
</comment>
<reference key="1">
    <citation type="journal article" date="2007" name="Proc. Natl. Acad. Sci. U.S.A.">
        <title>Genome sequencing reveals complex secondary metabolome in the marine actinomycete Salinispora tropica.</title>
        <authorList>
            <person name="Udwary D.W."/>
            <person name="Zeigler L."/>
            <person name="Asolkar R.N."/>
            <person name="Singan V."/>
            <person name="Lapidus A."/>
            <person name="Fenical W."/>
            <person name="Jensen P.R."/>
            <person name="Moore B.S."/>
        </authorList>
    </citation>
    <scope>NUCLEOTIDE SEQUENCE [LARGE SCALE GENOMIC DNA]</scope>
    <source>
        <strain>ATCC BAA-916 / DSM 44818 / JCM 13857 / NBRC 105044 / CNB-440</strain>
    </source>
</reference>